<name>PYRE_ECODH</name>
<reference key="1">
    <citation type="journal article" date="2008" name="J. Bacteriol.">
        <title>The complete genome sequence of Escherichia coli DH10B: insights into the biology of a laboratory workhorse.</title>
        <authorList>
            <person name="Durfee T."/>
            <person name="Nelson R."/>
            <person name="Baldwin S."/>
            <person name="Plunkett G. III"/>
            <person name="Burland V."/>
            <person name="Mau B."/>
            <person name="Petrosino J.F."/>
            <person name="Qin X."/>
            <person name="Muzny D.M."/>
            <person name="Ayele M."/>
            <person name="Gibbs R.A."/>
            <person name="Csorgo B."/>
            <person name="Posfai G."/>
            <person name="Weinstock G.M."/>
            <person name="Blattner F.R."/>
        </authorList>
    </citation>
    <scope>NUCLEOTIDE SEQUENCE [LARGE SCALE GENOMIC DNA]</scope>
    <source>
        <strain>K12 / DH10B</strain>
    </source>
</reference>
<protein>
    <recommendedName>
        <fullName evidence="1">Orotate phosphoribosyltransferase</fullName>
        <shortName evidence="1">OPRT</shortName>
        <shortName evidence="1">OPRTase</shortName>
        <ecNumber evidence="1">2.4.2.10</ecNumber>
    </recommendedName>
</protein>
<proteinExistence type="inferred from homology"/>
<dbReference type="EC" id="2.4.2.10" evidence="1"/>
<dbReference type="EMBL" id="CP000948">
    <property type="protein sequence ID" value="ACB04692.1"/>
    <property type="molecule type" value="Genomic_DNA"/>
</dbReference>
<dbReference type="RefSeq" id="WP_000806177.1">
    <property type="nucleotide sequence ID" value="NC_010473.1"/>
</dbReference>
<dbReference type="SMR" id="B1X976"/>
<dbReference type="GeneID" id="75202211"/>
<dbReference type="KEGG" id="ecd:ECDH10B_3824"/>
<dbReference type="HOGENOM" id="CLU_074878_0_1_6"/>
<dbReference type="UniPathway" id="UPA00070">
    <property type="reaction ID" value="UER00119"/>
</dbReference>
<dbReference type="GO" id="GO:0005737">
    <property type="term" value="C:cytoplasm"/>
    <property type="evidence" value="ECO:0007669"/>
    <property type="project" value="TreeGrafter"/>
</dbReference>
<dbReference type="GO" id="GO:0000287">
    <property type="term" value="F:magnesium ion binding"/>
    <property type="evidence" value="ECO:0007669"/>
    <property type="project" value="UniProtKB-UniRule"/>
</dbReference>
<dbReference type="GO" id="GO:0004588">
    <property type="term" value="F:orotate phosphoribosyltransferase activity"/>
    <property type="evidence" value="ECO:0007669"/>
    <property type="project" value="UniProtKB-UniRule"/>
</dbReference>
<dbReference type="GO" id="GO:0006207">
    <property type="term" value="P:'de novo' pyrimidine nucleobase biosynthetic process"/>
    <property type="evidence" value="ECO:0007669"/>
    <property type="project" value="TreeGrafter"/>
</dbReference>
<dbReference type="GO" id="GO:0044205">
    <property type="term" value="P:'de novo' UMP biosynthetic process"/>
    <property type="evidence" value="ECO:0007669"/>
    <property type="project" value="UniProtKB-UniRule"/>
</dbReference>
<dbReference type="GO" id="GO:0046132">
    <property type="term" value="P:pyrimidine ribonucleoside biosynthetic process"/>
    <property type="evidence" value="ECO:0007669"/>
    <property type="project" value="TreeGrafter"/>
</dbReference>
<dbReference type="CDD" id="cd06223">
    <property type="entry name" value="PRTases_typeI"/>
    <property type="match status" value="1"/>
</dbReference>
<dbReference type="FunFam" id="3.40.50.2020:FF:000008">
    <property type="entry name" value="Orotate phosphoribosyltransferase"/>
    <property type="match status" value="1"/>
</dbReference>
<dbReference type="Gene3D" id="3.40.50.2020">
    <property type="match status" value="1"/>
</dbReference>
<dbReference type="HAMAP" id="MF_01208">
    <property type="entry name" value="PyrE"/>
    <property type="match status" value="1"/>
</dbReference>
<dbReference type="InterPro" id="IPR023031">
    <property type="entry name" value="OPRT"/>
</dbReference>
<dbReference type="InterPro" id="IPR004467">
    <property type="entry name" value="Or_phspho_trans_dom"/>
</dbReference>
<dbReference type="InterPro" id="IPR000836">
    <property type="entry name" value="PRibTrfase_dom"/>
</dbReference>
<dbReference type="InterPro" id="IPR029057">
    <property type="entry name" value="PRTase-like"/>
</dbReference>
<dbReference type="NCBIfam" id="TIGR00336">
    <property type="entry name" value="pyrE"/>
    <property type="match status" value="1"/>
</dbReference>
<dbReference type="PANTHER" id="PTHR46683">
    <property type="entry name" value="OROTATE PHOSPHORIBOSYLTRANSFERASE 1-RELATED"/>
    <property type="match status" value="1"/>
</dbReference>
<dbReference type="PANTHER" id="PTHR46683:SF1">
    <property type="entry name" value="OROTATE PHOSPHORIBOSYLTRANSFERASE 1-RELATED"/>
    <property type="match status" value="1"/>
</dbReference>
<dbReference type="Pfam" id="PF00156">
    <property type="entry name" value="Pribosyltran"/>
    <property type="match status" value="1"/>
</dbReference>
<dbReference type="SUPFAM" id="SSF53271">
    <property type="entry name" value="PRTase-like"/>
    <property type="match status" value="1"/>
</dbReference>
<dbReference type="PROSITE" id="PS00103">
    <property type="entry name" value="PUR_PYR_PR_TRANSFER"/>
    <property type="match status" value="1"/>
</dbReference>
<feature type="chain" id="PRO_1000138789" description="Orotate phosphoribosyltransferase">
    <location>
        <begin position="1"/>
        <end position="213"/>
    </location>
</feature>
<feature type="binding site" description="in other chain" evidence="1">
    <location>
        <position position="26"/>
    </location>
    <ligand>
        <name>5-phospho-alpha-D-ribose 1-diphosphate</name>
        <dbReference type="ChEBI" id="CHEBI:58017"/>
        <note>ligand shared between dimeric partners</note>
    </ligand>
</feature>
<feature type="binding site" evidence="1">
    <location>
        <begin position="34"/>
        <end position="35"/>
    </location>
    <ligand>
        <name>orotate</name>
        <dbReference type="ChEBI" id="CHEBI:30839"/>
    </ligand>
</feature>
<feature type="binding site" description="in other chain" evidence="1">
    <location>
        <begin position="72"/>
        <end position="73"/>
    </location>
    <ligand>
        <name>5-phospho-alpha-D-ribose 1-diphosphate</name>
        <dbReference type="ChEBI" id="CHEBI:58017"/>
        <note>ligand shared between dimeric partners</note>
    </ligand>
</feature>
<feature type="binding site" evidence="1">
    <location>
        <position position="99"/>
    </location>
    <ligand>
        <name>5-phospho-alpha-D-ribose 1-diphosphate</name>
        <dbReference type="ChEBI" id="CHEBI:58017"/>
        <note>ligand shared between dimeric partners</note>
    </ligand>
</feature>
<feature type="binding site" description="in other chain" evidence="1">
    <location>
        <position position="100"/>
    </location>
    <ligand>
        <name>5-phospho-alpha-D-ribose 1-diphosphate</name>
        <dbReference type="ChEBI" id="CHEBI:58017"/>
        <note>ligand shared between dimeric partners</note>
    </ligand>
</feature>
<feature type="binding site" evidence="1">
    <location>
        <position position="103"/>
    </location>
    <ligand>
        <name>5-phospho-alpha-D-ribose 1-diphosphate</name>
        <dbReference type="ChEBI" id="CHEBI:58017"/>
        <note>ligand shared between dimeric partners</note>
    </ligand>
</feature>
<feature type="binding site" evidence="1">
    <location>
        <position position="105"/>
    </location>
    <ligand>
        <name>5-phospho-alpha-D-ribose 1-diphosphate</name>
        <dbReference type="ChEBI" id="CHEBI:58017"/>
        <note>ligand shared between dimeric partners</note>
    </ligand>
</feature>
<feature type="binding site" description="in other chain" evidence="1">
    <location>
        <begin position="124"/>
        <end position="132"/>
    </location>
    <ligand>
        <name>5-phospho-alpha-D-ribose 1-diphosphate</name>
        <dbReference type="ChEBI" id="CHEBI:58017"/>
        <note>ligand shared between dimeric partners</note>
    </ligand>
</feature>
<feature type="binding site" evidence="1">
    <location>
        <position position="128"/>
    </location>
    <ligand>
        <name>orotate</name>
        <dbReference type="ChEBI" id="CHEBI:30839"/>
    </ligand>
</feature>
<feature type="binding site" evidence="1">
    <location>
        <position position="156"/>
    </location>
    <ligand>
        <name>orotate</name>
        <dbReference type="ChEBI" id="CHEBI:30839"/>
    </ligand>
</feature>
<comment type="function">
    <text evidence="1">Catalyzes the transfer of a ribosyl phosphate group from 5-phosphoribose 1-diphosphate to orotate, leading to the formation of orotidine monophosphate (OMP).</text>
</comment>
<comment type="catalytic activity">
    <reaction evidence="1">
        <text>orotidine 5'-phosphate + diphosphate = orotate + 5-phospho-alpha-D-ribose 1-diphosphate</text>
        <dbReference type="Rhea" id="RHEA:10380"/>
        <dbReference type="ChEBI" id="CHEBI:30839"/>
        <dbReference type="ChEBI" id="CHEBI:33019"/>
        <dbReference type="ChEBI" id="CHEBI:57538"/>
        <dbReference type="ChEBI" id="CHEBI:58017"/>
        <dbReference type="EC" id="2.4.2.10"/>
    </reaction>
</comment>
<comment type="cofactor">
    <cofactor evidence="1">
        <name>Mg(2+)</name>
        <dbReference type="ChEBI" id="CHEBI:18420"/>
    </cofactor>
</comment>
<comment type="pathway">
    <text evidence="1">Pyrimidine metabolism; UMP biosynthesis via de novo pathway; UMP from orotate: step 1/2.</text>
</comment>
<comment type="subunit">
    <text evidence="1">Homodimer.</text>
</comment>
<comment type="similarity">
    <text evidence="1">Belongs to the purine/pyrimidine phosphoribosyltransferase family. PyrE subfamily.</text>
</comment>
<evidence type="ECO:0000255" key="1">
    <source>
        <dbReference type="HAMAP-Rule" id="MF_01208"/>
    </source>
</evidence>
<accession>B1X976</accession>
<sequence>MKPYQRQFIEFALSKQVLKFGEFTLKSGRKSPYFFNAGLFNTGRDLALLGRFYAEALVDSGIEFDLLFGPAYKGIPIATTTAVALAEHHDLDLPYCFNRKEAKDHGEGGNLVGSALQGRVMLVDDVITAGTAIRESMEIIQANGATLAGVLISLDRQERGRGEISAIQEVERDYNCKVISIITLKDLIAYLEEKPEMAEHLAAVKAYREEFGV</sequence>
<keyword id="KW-0328">Glycosyltransferase</keyword>
<keyword id="KW-0460">Magnesium</keyword>
<keyword id="KW-0665">Pyrimidine biosynthesis</keyword>
<keyword id="KW-0808">Transferase</keyword>
<organism>
    <name type="scientific">Escherichia coli (strain K12 / DH10B)</name>
    <dbReference type="NCBI Taxonomy" id="316385"/>
    <lineage>
        <taxon>Bacteria</taxon>
        <taxon>Pseudomonadati</taxon>
        <taxon>Pseudomonadota</taxon>
        <taxon>Gammaproteobacteria</taxon>
        <taxon>Enterobacterales</taxon>
        <taxon>Enterobacteriaceae</taxon>
        <taxon>Escherichia</taxon>
    </lineage>
</organism>
<gene>
    <name evidence="1" type="primary">pyrE</name>
    <name type="ordered locus">ECDH10B_3824</name>
</gene>